<reference key="1">
    <citation type="journal article" date="2006" name="Lancet">
        <title>Complete genome sequence of USA300, an epidemic clone of community-acquired meticillin-resistant Staphylococcus aureus.</title>
        <authorList>
            <person name="Diep B.A."/>
            <person name="Gill S.R."/>
            <person name="Chang R.F."/>
            <person name="Phan T.H."/>
            <person name="Chen J.H."/>
            <person name="Davidson M.G."/>
            <person name="Lin F."/>
            <person name="Lin J."/>
            <person name="Carleton H.A."/>
            <person name="Mongodin E.F."/>
            <person name="Sensabaugh G.F."/>
            <person name="Perdreau-Remington F."/>
        </authorList>
    </citation>
    <scope>NUCLEOTIDE SEQUENCE [LARGE SCALE GENOMIC DNA]</scope>
    <source>
        <strain>USA300</strain>
    </source>
</reference>
<protein>
    <recommendedName>
        <fullName evidence="1">Phosphoribosylaminoimidazole-succinocarboxamide synthase</fullName>
        <ecNumber evidence="1">6.3.2.6</ecNumber>
    </recommendedName>
    <alternativeName>
        <fullName evidence="1">SAICAR synthetase</fullName>
    </alternativeName>
</protein>
<dbReference type="EC" id="6.3.2.6" evidence="1"/>
<dbReference type="EMBL" id="CP000255">
    <property type="protein sequence ID" value="ABD20519.1"/>
    <property type="molecule type" value="Genomic_DNA"/>
</dbReference>
<dbReference type="RefSeq" id="WP_000174053.1">
    <property type="nucleotide sequence ID" value="NZ_CP027476.1"/>
</dbReference>
<dbReference type="SMR" id="Q2FI12"/>
<dbReference type="KEGG" id="saa:SAUSA300_0968"/>
<dbReference type="HOGENOM" id="CLU_061495_2_0_9"/>
<dbReference type="OMA" id="EFCYKND"/>
<dbReference type="UniPathway" id="UPA00074">
    <property type="reaction ID" value="UER00131"/>
</dbReference>
<dbReference type="Proteomes" id="UP000001939">
    <property type="component" value="Chromosome"/>
</dbReference>
<dbReference type="GO" id="GO:0005524">
    <property type="term" value="F:ATP binding"/>
    <property type="evidence" value="ECO:0007669"/>
    <property type="project" value="UniProtKB-KW"/>
</dbReference>
<dbReference type="GO" id="GO:0004639">
    <property type="term" value="F:phosphoribosylaminoimidazolesuccinocarboxamide synthase activity"/>
    <property type="evidence" value="ECO:0007669"/>
    <property type="project" value="UniProtKB-UniRule"/>
</dbReference>
<dbReference type="GO" id="GO:0006189">
    <property type="term" value="P:'de novo' IMP biosynthetic process"/>
    <property type="evidence" value="ECO:0007669"/>
    <property type="project" value="UniProtKB-UniRule"/>
</dbReference>
<dbReference type="GO" id="GO:0009236">
    <property type="term" value="P:cobalamin biosynthetic process"/>
    <property type="evidence" value="ECO:0007669"/>
    <property type="project" value="InterPro"/>
</dbReference>
<dbReference type="CDD" id="cd01415">
    <property type="entry name" value="SAICAR_synt_PurC"/>
    <property type="match status" value="1"/>
</dbReference>
<dbReference type="FunFam" id="3.30.200.20:FF:000189">
    <property type="entry name" value="Phosphoribosylaminoimidazole-succinocarboxamide synthase"/>
    <property type="match status" value="1"/>
</dbReference>
<dbReference type="FunFam" id="3.30.470.20:FF:000006">
    <property type="entry name" value="Phosphoribosylaminoimidazole-succinocarboxamide synthase"/>
    <property type="match status" value="1"/>
</dbReference>
<dbReference type="Gene3D" id="3.30.470.20">
    <property type="entry name" value="ATP-grasp fold, B domain"/>
    <property type="match status" value="1"/>
</dbReference>
<dbReference type="Gene3D" id="3.30.200.20">
    <property type="entry name" value="Phosphorylase Kinase, domain 1"/>
    <property type="match status" value="1"/>
</dbReference>
<dbReference type="HAMAP" id="MF_00137">
    <property type="entry name" value="SAICAR_synth"/>
    <property type="match status" value="1"/>
</dbReference>
<dbReference type="InterPro" id="IPR028923">
    <property type="entry name" value="SAICAR_synt/ADE2_N"/>
</dbReference>
<dbReference type="InterPro" id="IPR033934">
    <property type="entry name" value="SAICAR_synt_PurC"/>
</dbReference>
<dbReference type="InterPro" id="IPR001636">
    <property type="entry name" value="SAICAR_synth"/>
</dbReference>
<dbReference type="InterPro" id="IPR050089">
    <property type="entry name" value="SAICAR_synthetase"/>
</dbReference>
<dbReference type="InterPro" id="IPR018236">
    <property type="entry name" value="SAICAR_synthetase_CS"/>
</dbReference>
<dbReference type="NCBIfam" id="TIGR00081">
    <property type="entry name" value="purC"/>
    <property type="match status" value="1"/>
</dbReference>
<dbReference type="PANTHER" id="PTHR43599">
    <property type="entry name" value="MULTIFUNCTIONAL PROTEIN ADE2"/>
    <property type="match status" value="1"/>
</dbReference>
<dbReference type="PANTHER" id="PTHR43599:SF3">
    <property type="entry name" value="SI:DKEY-6E2.2"/>
    <property type="match status" value="1"/>
</dbReference>
<dbReference type="Pfam" id="PF01259">
    <property type="entry name" value="SAICAR_synt"/>
    <property type="match status" value="1"/>
</dbReference>
<dbReference type="SUPFAM" id="SSF56104">
    <property type="entry name" value="SAICAR synthase-like"/>
    <property type="match status" value="1"/>
</dbReference>
<dbReference type="PROSITE" id="PS01057">
    <property type="entry name" value="SAICAR_SYNTHETASE_1"/>
    <property type="match status" value="1"/>
</dbReference>
<dbReference type="PROSITE" id="PS01058">
    <property type="entry name" value="SAICAR_SYNTHETASE_2"/>
    <property type="match status" value="1"/>
</dbReference>
<gene>
    <name evidence="1" type="primary">purC</name>
    <name type="ordered locus">SAUSA300_0968</name>
</gene>
<proteinExistence type="inferred from homology"/>
<organism>
    <name type="scientific">Staphylococcus aureus (strain USA300)</name>
    <dbReference type="NCBI Taxonomy" id="367830"/>
    <lineage>
        <taxon>Bacteria</taxon>
        <taxon>Bacillati</taxon>
        <taxon>Bacillota</taxon>
        <taxon>Bacilli</taxon>
        <taxon>Bacillales</taxon>
        <taxon>Staphylococcaceae</taxon>
        <taxon>Staphylococcus</taxon>
    </lineage>
</organism>
<evidence type="ECO:0000255" key="1">
    <source>
        <dbReference type="HAMAP-Rule" id="MF_00137"/>
    </source>
</evidence>
<name>PUR7_STAA3</name>
<keyword id="KW-0067">ATP-binding</keyword>
<keyword id="KW-0436">Ligase</keyword>
<keyword id="KW-0547">Nucleotide-binding</keyword>
<keyword id="KW-0658">Purine biosynthesis</keyword>
<comment type="catalytic activity">
    <reaction evidence="1">
        <text>5-amino-1-(5-phospho-D-ribosyl)imidazole-4-carboxylate + L-aspartate + ATP = (2S)-2-[5-amino-1-(5-phospho-beta-D-ribosyl)imidazole-4-carboxamido]succinate + ADP + phosphate + 2 H(+)</text>
        <dbReference type="Rhea" id="RHEA:22628"/>
        <dbReference type="ChEBI" id="CHEBI:15378"/>
        <dbReference type="ChEBI" id="CHEBI:29991"/>
        <dbReference type="ChEBI" id="CHEBI:30616"/>
        <dbReference type="ChEBI" id="CHEBI:43474"/>
        <dbReference type="ChEBI" id="CHEBI:58443"/>
        <dbReference type="ChEBI" id="CHEBI:77657"/>
        <dbReference type="ChEBI" id="CHEBI:456216"/>
        <dbReference type="EC" id="6.3.2.6"/>
    </reaction>
</comment>
<comment type="pathway">
    <text evidence="1">Purine metabolism; IMP biosynthesis via de novo pathway; 5-amino-1-(5-phospho-D-ribosyl)imidazole-4-carboxamide from 5-amino-1-(5-phospho-D-ribosyl)imidazole-4-carboxylate: step 1/2.</text>
</comment>
<comment type="similarity">
    <text evidence="1">Belongs to the SAICAR synthetase family.</text>
</comment>
<sequence length="234" mass="26693">MTLLYEGKAKRIFSTNQENELRVEYKDEVTAGNGAKKDTMAGKGRLNNQITSIIFKYLQENGIESHFIKQLSETEQLVKPVKIIPLEVVVRNIASGSITKRLGFENGEVFREPLVEFFYKNDALNDPLITDDHVKLLNIASDEDIEILKSKALKINNVLKQLMDAMNLKLVDFKIEFGKTETGQILLADEISPDTCRIWDKATNANFDKDVYRNNTGSLIETYQIFLNKLEDLK</sequence>
<accession>Q2FI12</accession>
<feature type="chain" id="PRO_1000018787" description="Phosphoribosylaminoimidazole-succinocarboxamide synthase">
    <location>
        <begin position="1"/>
        <end position="234"/>
    </location>
</feature>